<evidence type="ECO:0000255" key="1">
    <source>
        <dbReference type="HAMAP-Rule" id="MF_01432"/>
    </source>
</evidence>
<gene>
    <name evidence="1" type="primary">rihC</name>
    <name type="ordered locus">SDY_0052</name>
</gene>
<keyword id="KW-0326">Glycosidase</keyword>
<keyword id="KW-0378">Hydrolase</keyword>
<keyword id="KW-1185">Reference proteome</keyword>
<organism>
    <name type="scientific">Shigella dysenteriae serotype 1 (strain Sd197)</name>
    <dbReference type="NCBI Taxonomy" id="300267"/>
    <lineage>
        <taxon>Bacteria</taxon>
        <taxon>Pseudomonadati</taxon>
        <taxon>Pseudomonadota</taxon>
        <taxon>Gammaproteobacteria</taxon>
        <taxon>Enterobacterales</taxon>
        <taxon>Enterobacteriaceae</taxon>
        <taxon>Shigella</taxon>
    </lineage>
</organism>
<reference key="1">
    <citation type="journal article" date="2005" name="Nucleic Acids Res.">
        <title>Genome dynamics and diversity of Shigella species, the etiologic agents of bacillary dysentery.</title>
        <authorList>
            <person name="Yang F."/>
            <person name="Yang J."/>
            <person name="Zhang X."/>
            <person name="Chen L."/>
            <person name="Jiang Y."/>
            <person name="Yan Y."/>
            <person name="Tang X."/>
            <person name="Wang J."/>
            <person name="Xiong Z."/>
            <person name="Dong J."/>
            <person name="Xue Y."/>
            <person name="Zhu Y."/>
            <person name="Xu X."/>
            <person name="Sun L."/>
            <person name="Chen S."/>
            <person name="Nie H."/>
            <person name="Peng J."/>
            <person name="Xu J."/>
            <person name="Wang Y."/>
            <person name="Yuan Z."/>
            <person name="Wen Y."/>
            <person name="Yao Z."/>
            <person name="Shen Y."/>
            <person name="Qiang B."/>
            <person name="Hou Y."/>
            <person name="Yu J."/>
            <person name="Jin Q."/>
        </authorList>
    </citation>
    <scope>NUCLEOTIDE SEQUENCE [LARGE SCALE GENOMIC DNA]</scope>
    <source>
        <strain>Sd197</strain>
    </source>
</reference>
<protein>
    <recommendedName>
        <fullName evidence="1">Non-specific ribonucleoside hydrolase RihC</fullName>
        <ecNumber evidence="1">3.2.-.-</ecNumber>
    </recommendedName>
    <alternativeName>
        <fullName evidence="1">Purine/pyrimidine ribonucleoside hydrolase</fullName>
    </alternativeName>
</protein>
<dbReference type="EC" id="3.2.-.-" evidence="1"/>
<dbReference type="EMBL" id="CP000034">
    <property type="protein sequence ID" value="ABB60290.1"/>
    <property type="molecule type" value="Genomic_DNA"/>
</dbReference>
<dbReference type="RefSeq" id="WP_001239123.1">
    <property type="nucleotide sequence ID" value="NC_007606.1"/>
</dbReference>
<dbReference type="RefSeq" id="YP_401779.1">
    <property type="nucleotide sequence ID" value="NC_007606.1"/>
</dbReference>
<dbReference type="SMR" id="Q32K67"/>
<dbReference type="STRING" id="300267.SDY_0052"/>
<dbReference type="EnsemblBacteria" id="ABB60290">
    <property type="protein sequence ID" value="ABB60290"/>
    <property type="gene ID" value="SDY_0052"/>
</dbReference>
<dbReference type="KEGG" id="sdy:SDY_0052"/>
<dbReference type="PATRIC" id="fig|300267.13.peg.56"/>
<dbReference type="HOGENOM" id="CLU_036838_2_2_6"/>
<dbReference type="Proteomes" id="UP000002716">
    <property type="component" value="Chromosome"/>
</dbReference>
<dbReference type="GO" id="GO:0005829">
    <property type="term" value="C:cytosol"/>
    <property type="evidence" value="ECO:0007669"/>
    <property type="project" value="TreeGrafter"/>
</dbReference>
<dbReference type="GO" id="GO:0008477">
    <property type="term" value="F:purine nucleosidase activity"/>
    <property type="evidence" value="ECO:0007669"/>
    <property type="project" value="TreeGrafter"/>
</dbReference>
<dbReference type="GO" id="GO:0045437">
    <property type="term" value="F:uridine nucleosidase activity"/>
    <property type="evidence" value="ECO:0007669"/>
    <property type="project" value="UniProtKB-ARBA"/>
</dbReference>
<dbReference type="GO" id="GO:0006144">
    <property type="term" value="P:purine nucleobase metabolic process"/>
    <property type="evidence" value="ECO:0007669"/>
    <property type="project" value="UniProtKB-UniRule"/>
</dbReference>
<dbReference type="GO" id="GO:0006152">
    <property type="term" value="P:purine nucleoside catabolic process"/>
    <property type="evidence" value="ECO:0007669"/>
    <property type="project" value="TreeGrafter"/>
</dbReference>
<dbReference type="GO" id="GO:0006206">
    <property type="term" value="P:pyrimidine nucleobase metabolic process"/>
    <property type="evidence" value="ECO:0007669"/>
    <property type="project" value="UniProtKB-UniRule"/>
</dbReference>
<dbReference type="CDD" id="cd02651">
    <property type="entry name" value="nuc_hydro_IU_UC_XIUA"/>
    <property type="match status" value="1"/>
</dbReference>
<dbReference type="FunFam" id="3.90.245.10:FF:000002">
    <property type="entry name" value="Non-specific ribonucleoside hydrolase RihC"/>
    <property type="match status" value="1"/>
</dbReference>
<dbReference type="Gene3D" id="3.90.245.10">
    <property type="entry name" value="Ribonucleoside hydrolase-like"/>
    <property type="match status" value="1"/>
</dbReference>
<dbReference type="HAMAP" id="MF_01432">
    <property type="entry name" value="Nucleosid_hydro_RihC"/>
    <property type="match status" value="1"/>
</dbReference>
<dbReference type="InterPro" id="IPR015910">
    <property type="entry name" value="I/U_nuclsd_hydro_CS"/>
</dbReference>
<dbReference type="InterPro" id="IPR001910">
    <property type="entry name" value="Inosine/uridine_hydrolase_dom"/>
</dbReference>
<dbReference type="InterPro" id="IPR023186">
    <property type="entry name" value="IUNH"/>
</dbReference>
<dbReference type="InterPro" id="IPR022976">
    <property type="entry name" value="Nucleosid_hydro_RihC_nonspecif"/>
</dbReference>
<dbReference type="InterPro" id="IPR036452">
    <property type="entry name" value="Ribo_hydro-like"/>
</dbReference>
<dbReference type="NCBIfam" id="NF008036">
    <property type="entry name" value="PRK10768.1"/>
    <property type="match status" value="1"/>
</dbReference>
<dbReference type="PANTHER" id="PTHR12304">
    <property type="entry name" value="INOSINE-URIDINE PREFERRING NUCLEOSIDE HYDROLASE"/>
    <property type="match status" value="1"/>
</dbReference>
<dbReference type="PANTHER" id="PTHR12304:SF15">
    <property type="entry name" value="NON-SPECIFIC RIBONUCLEOSIDE HYDROLASE RIHC"/>
    <property type="match status" value="1"/>
</dbReference>
<dbReference type="Pfam" id="PF01156">
    <property type="entry name" value="IU_nuc_hydro"/>
    <property type="match status" value="1"/>
</dbReference>
<dbReference type="SUPFAM" id="SSF53590">
    <property type="entry name" value="Nucleoside hydrolase"/>
    <property type="match status" value="1"/>
</dbReference>
<dbReference type="PROSITE" id="PS01247">
    <property type="entry name" value="IUNH"/>
    <property type="match status" value="1"/>
</dbReference>
<comment type="function">
    <text evidence="1">Hydrolyzes both purine and pyrimidine ribonucleosides with a broad-substrate specificity.</text>
</comment>
<comment type="similarity">
    <text evidence="1">Belongs to the IUNH family. RihC subfamily.</text>
</comment>
<sequence length="304" mass="32561">MRLPIFLDTDPGIDDAVAIAAAIFAPELDLQLMTTVAGNVSVEKTTRNALQLLHFWNAEIPLAQGAAVPLVRAPRDAASVHGESGMAGYDFVEHNRKPLGIPAFLAIRDALMCAPEPVTLVAIGPLTNIALLLSQCPECKPYIRRLVIMGGSAGRGNCTPNAEFNIAADPEAAACVFRSGIEIVMCGLDVTNQAILTPDYLATLPELNRTGKMLHALFSHYRSGSMQSGLRMHDLCAIAWLVRPDLFTLKPCFVAVETQGEFTSGTTVVDIDGCRGKPANVQVALDLNVKGFQQWVPEVLALAS</sequence>
<accession>Q32K67</accession>
<proteinExistence type="inferred from homology"/>
<name>RIHC_SHIDS</name>
<feature type="chain" id="PRO_1000024409" description="Non-specific ribonucleoside hydrolase RihC">
    <location>
        <begin position="1"/>
        <end position="304"/>
    </location>
</feature>
<feature type="active site" evidence="1">
    <location>
        <position position="233"/>
    </location>
</feature>